<proteinExistence type="inferred from homology"/>
<sequence>MGPKTLPQLAGKWQVLCMLSLCCWGWVSGQLRYSVVEESEPGTLVGNVAQDLGLKMTDLLSRRLQLGSEENGRYFSLSLMSGALAVNQKIDRESLCGASTSCLLPVQVVTEHPLELIRVEVEILDLNDNSPSFATPEREMRISESAASGARFPLDSAQDPDVGTNTVSFYTLSPNSHFSLNVKTLKDGKPFPELVLEQQLDREAQARHQLVLTAVDGGTPARSGTTLISVIVLDINDNAPTFQSSVLRVGIPENAPIGTLLLRLNATDPDEGTNGQLDYSFGDHTSEAVRNLFGLDPSSGAIHVLGPIDFEESRFYEIHARARDQGQPAMEGHCVIQVEVGDVNDNAPEVLLASLANPVLESTPVGTVVGLFNVRDRDSGRNGEVSLDISPDLPFQIKPSENHYSLLTSQPLDREATSHYIIELLASDAGSPSLHKHLTIRLNISDVNDNAPRFNQQLYTAYILENRPPGSLLCTVAASDPDTGDNARLTYSVVGNQVQGAPASSFVYVNPEDGRVFAQRTFDYELLQMLQIVVGVRDSGSPPLHANTSLHVFVLDENDNAPAVLHPRPGWEHSAPQRLPRSAPPGSLVTKVTAVDADAGHNAWLSYSLLPQSTAPGLFLVSTHTGEVRTARALLEDDSDTQQVVVLVRDNGDPSLSSTATVLLVLEDEDPEEMPKSSDFLIHPPERSDLTLYLIVALATVSLLSLVTFTFLSAKCLQGNADGDGGGGQCCRRQDSPSPDFYKQSSPNLQVSSDGTLKYMEVTLRPTDSQSHCYRTCFSPASDGSDFTFLRPLSVQQPTALALEPDAIRSRSNTLRERSQQAPPNTDWRFSQAQRPGTSGSQNGDDTGTWPNNQFDTEMLQAMILASASEAADGSSTLGGGAGTMGLSARYGPQFTLQHVPDYRQNVYIPGSNATLTNAAGKRDGKAPAGGNGNKKKSGKKEKK</sequence>
<name>PCDGM_PANTR</name>
<organism>
    <name type="scientific">Pan troglodytes</name>
    <name type="common">Chimpanzee</name>
    <dbReference type="NCBI Taxonomy" id="9598"/>
    <lineage>
        <taxon>Eukaryota</taxon>
        <taxon>Metazoa</taxon>
        <taxon>Chordata</taxon>
        <taxon>Craniata</taxon>
        <taxon>Vertebrata</taxon>
        <taxon>Euteleostomi</taxon>
        <taxon>Mammalia</taxon>
        <taxon>Eutheria</taxon>
        <taxon>Euarchontoglires</taxon>
        <taxon>Primates</taxon>
        <taxon>Haplorrhini</taxon>
        <taxon>Catarrhini</taxon>
        <taxon>Hominidae</taxon>
        <taxon>Pan</taxon>
    </lineage>
</organism>
<evidence type="ECO:0000250" key="1"/>
<evidence type="ECO:0000255" key="2"/>
<evidence type="ECO:0000255" key="3">
    <source>
        <dbReference type="PROSITE-ProRule" id="PRU00043"/>
    </source>
</evidence>
<evidence type="ECO:0000256" key="4">
    <source>
        <dbReference type="SAM" id="MobiDB-lite"/>
    </source>
</evidence>
<accession>Q5DRA2</accession>
<dbReference type="RefSeq" id="NP_001076027.1">
    <property type="nucleotide sequence ID" value="NM_001082558.4"/>
</dbReference>
<dbReference type="SMR" id="Q5DRA2"/>
<dbReference type="FunCoup" id="Q5DRA2">
    <property type="interactions" value="7"/>
</dbReference>
<dbReference type="STRING" id="9598.ENSPTRP00000029648"/>
<dbReference type="GlyCosmos" id="Q5DRA2">
    <property type="glycosylation" value="3 sites, No reported glycans"/>
</dbReference>
<dbReference type="Ensembl" id="ENSPTRT00000032094.4">
    <property type="protein sequence ID" value="ENSPTRP00000029648.3"/>
    <property type="gene ID" value="ENSPTRG00000017346.7"/>
</dbReference>
<dbReference type="GeneID" id="100034697"/>
<dbReference type="KEGG" id="ptr:100034697"/>
<dbReference type="CTD" id="56097"/>
<dbReference type="GeneTree" id="ENSGT00940000162232"/>
<dbReference type="HOGENOM" id="CLU_006480_0_0_1"/>
<dbReference type="InParanoid" id="Q5DRA2"/>
<dbReference type="OrthoDB" id="7494at9604"/>
<dbReference type="Proteomes" id="UP000002277">
    <property type="component" value="Chromosome 5"/>
</dbReference>
<dbReference type="Bgee" id="ENSPTRG00000017346">
    <property type="expression patterns" value="Expressed in dorsolateral prefrontal cortex and 21 other cell types or tissues"/>
</dbReference>
<dbReference type="GO" id="GO:0005886">
    <property type="term" value="C:plasma membrane"/>
    <property type="evidence" value="ECO:0007669"/>
    <property type="project" value="UniProtKB-SubCell"/>
</dbReference>
<dbReference type="GO" id="GO:0005509">
    <property type="term" value="F:calcium ion binding"/>
    <property type="evidence" value="ECO:0007669"/>
    <property type="project" value="InterPro"/>
</dbReference>
<dbReference type="GO" id="GO:0007156">
    <property type="term" value="P:homophilic cell adhesion via plasma membrane adhesion molecules"/>
    <property type="evidence" value="ECO:0007669"/>
    <property type="project" value="InterPro"/>
</dbReference>
<dbReference type="GO" id="GO:0043524">
    <property type="term" value="P:negative regulation of neuron apoptotic process"/>
    <property type="evidence" value="ECO:0007669"/>
    <property type="project" value="Ensembl"/>
</dbReference>
<dbReference type="GO" id="GO:0007399">
    <property type="term" value="P:nervous system development"/>
    <property type="evidence" value="ECO:0007669"/>
    <property type="project" value="UniProtKB-ARBA"/>
</dbReference>
<dbReference type="GO" id="GO:0050808">
    <property type="term" value="P:synapse organization"/>
    <property type="evidence" value="ECO:0007669"/>
    <property type="project" value="Ensembl"/>
</dbReference>
<dbReference type="CDD" id="cd11304">
    <property type="entry name" value="Cadherin_repeat"/>
    <property type="match status" value="6"/>
</dbReference>
<dbReference type="FunFam" id="2.60.40.60:FF:000004">
    <property type="entry name" value="Protocadherin 1 gamma 2"/>
    <property type="match status" value="1"/>
</dbReference>
<dbReference type="FunFam" id="2.60.40.60:FF:000002">
    <property type="entry name" value="Protocadherin alpha 2"/>
    <property type="match status" value="1"/>
</dbReference>
<dbReference type="FunFam" id="2.60.40.60:FF:000006">
    <property type="entry name" value="Protocadherin alpha 2"/>
    <property type="match status" value="1"/>
</dbReference>
<dbReference type="FunFam" id="2.60.40.60:FF:000129">
    <property type="entry name" value="protocadherin alpha-C2 isoform X1"/>
    <property type="match status" value="1"/>
</dbReference>
<dbReference type="FunFam" id="2.60.40.60:FF:000018">
    <property type="entry name" value="Protocadherin gamma c3"/>
    <property type="match status" value="1"/>
</dbReference>
<dbReference type="FunFam" id="2.60.40.60:FF:000216">
    <property type="entry name" value="protocadherin gamma-C5 isoform X1"/>
    <property type="match status" value="1"/>
</dbReference>
<dbReference type="Gene3D" id="2.60.40.60">
    <property type="entry name" value="Cadherins"/>
    <property type="match status" value="6"/>
</dbReference>
<dbReference type="InterPro" id="IPR002126">
    <property type="entry name" value="Cadherin-like_dom"/>
</dbReference>
<dbReference type="InterPro" id="IPR015919">
    <property type="entry name" value="Cadherin-like_sf"/>
</dbReference>
<dbReference type="InterPro" id="IPR032455">
    <property type="entry name" value="Cadherin_C"/>
</dbReference>
<dbReference type="InterPro" id="IPR031904">
    <property type="entry name" value="Cadherin_CBD"/>
</dbReference>
<dbReference type="InterPro" id="IPR020894">
    <property type="entry name" value="Cadherin_CS"/>
</dbReference>
<dbReference type="InterPro" id="IPR013164">
    <property type="entry name" value="Cadherin_N"/>
</dbReference>
<dbReference type="InterPro" id="IPR050174">
    <property type="entry name" value="Protocadherin/Cadherin-CA"/>
</dbReference>
<dbReference type="PANTHER" id="PTHR24028">
    <property type="entry name" value="CADHERIN-87A"/>
    <property type="match status" value="1"/>
</dbReference>
<dbReference type="PANTHER" id="PTHR24028:SF349">
    <property type="entry name" value="PROTOCADHERIN GAMMA-C5"/>
    <property type="match status" value="1"/>
</dbReference>
<dbReference type="Pfam" id="PF00028">
    <property type="entry name" value="Cadherin"/>
    <property type="match status" value="5"/>
</dbReference>
<dbReference type="Pfam" id="PF08266">
    <property type="entry name" value="Cadherin_2"/>
    <property type="match status" value="1"/>
</dbReference>
<dbReference type="Pfam" id="PF16492">
    <property type="entry name" value="Cadherin_C_2"/>
    <property type="match status" value="1"/>
</dbReference>
<dbReference type="Pfam" id="PF15974">
    <property type="entry name" value="Cadherin_tail"/>
    <property type="match status" value="1"/>
</dbReference>
<dbReference type="PRINTS" id="PR00205">
    <property type="entry name" value="CADHERIN"/>
</dbReference>
<dbReference type="SMART" id="SM00112">
    <property type="entry name" value="CA"/>
    <property type="match status" value="6"/>
</dbReference>
<dbReference type="SUPFAM" id="SSF49313">
    <property type="entry name" value="Cadherin-like"/>
    <property type="match status" value="6"/>
</dbReference>
<dbReference type="PROSITE" id="PS00232">
    <property type="entry name" value="CADHERIN_1"/>
    <property type="match status" value="5"/>
</dbReference>
<dbReference type="PROSITE" id="PS50268">
    <property type="entry name" value="CADHERIN_2"/>
    <property type="match status" value="6"/>
</dbReference>
<feature type="signal peptide" evidence="2">
    <location>
        <begin position="1"/>
        <end position="29"/>
    </location>
</feature>
<feature type="chain" id="PRO_0000003990" description="Protocadherin gamma-C5">
    <location>
        <begin position="30"/>
        <end position="944"/>
    </location>
</feature>
<feature type="topological domain" description="Extracellular" evidence="2">
    <location>
        <begin position="30"/>
        <end position="693"/>
    </location>
</feature>
<feature type="transmembrane region" description="Helical" evidence="2">
    <location>
        <begin position="694"/>
        <end position="714"/>
    </location>
</feature>
<feature type="topological domain" description="Cytoplasmic" evidence="2">
    <location>
        <begin position="715"/>
        <end position="944"/>
    </location>
</feature>
<feature type="domain" description="Cadherin 1" evidence="3">
    <location>
        <begin position="30"/>
        <end position="133"/>
    </location>
</feature>
<feature type="domain" description="Cadherin 2" evidence="3">
    <location>
        <begin position="134"/>
        <end position="242"/>
    </location>
</feature>
<feature type="domain" description="Cadherin 3" evidence="3">
    <location>
        <begin position="243"/>
        <end position="350"/>
    </location>
</feature>
<feature type="domain" description="Cadherin 4" evidence="3">
    <location>
        <begin position="351"/>
        <end position="454"/>
    </location>
</feature>
<feature type="domain" description="Cadherin 5" evidence="3">
    <location>
        <begin position="455"/>
        <end position="564"/>
    </location>
</feature>
<feature type="domain" description="Cadherin 6" evidence="3">
    <location>
        <begin position="571"/>
        <end position="677"/>
    </location>
</feature>
<feature type="region of interest" description="Disordered" evidence="4">
    <location>
        <begin position="722"/>
        <end position="747"/>
    </location>
</feature>
<feature type="region of interest" description="Disordered" evidence="4">
    <location>
        <begin position="812"/>
        <end position="853"/>
    </location>
</feature>
<feature type="region of interest" description="Disordered" evidence="4">
    <location>
        <begin position="914"/>
        <end position="944"/>
    </location>
</feature>
<feature type="compositionally biased region" description="Polar residues" evidence="4">
    <location>
        <begin position="820"/>
        <end position="853"/>
    </location>
</feature>
<feature type="compositionally biased region" description="Basic residues" evidence="4">
    <location>
        <begin position="934"/>
        <end position="944"/>
    </location>
</feature>
<feature type="glycosylation site" description="N-linked (GlcNAc...) asparagine" evidence="2">
    <location>
        <position position="265"/>
    </location>
</feature>
<feature type="glycosylation site" description="N-linked (GlcNAc...) asparagine" evidence="2">
    <location>
        <position position="443"/>
    </location>
</feature>
<feature type="glycosylation site" description="N-linked (GlcNAc...) asparagine" evidence="2">
    <location>
        <position position="547"/>
    </location>
</feature>
<gene>
    <name type="primary">PCDHGC5</name>
</gene>
<comment type="function">
    <text>Potential calcium-dependent cell-adhesion protein. May be involved in the establishment and maintenance of specific neuronal connections in the brain.</text>
</comment>
<comment type="subcellular location">
    <subcellularLocation>
        <location evidence="1">Cell membrane</location>
        <topology evidence="1">Single-pass type I membrane protein</topology>
    </subcellularLocation>
</comment>
<keyword id="KW-0106">Calcium</keyword>
<keyword id="KW-0130">Cell adhesion</keyword>
<keyword id="KW-1003">Cell membrane</keyword>
<keyword id="KW-0325">Glycoprotein</keyword>
<keyword id="KW-0472">Membrane</keyword>
<keyword id="KW-1185">Reference proteome</keyword>
<keyword id="KW-0677">Repeat</keyword>
<keyword id="KW-0732">Signal</keyword>
<keyword id="KW-0812">Transmembrane</keyword>
<keyword id="KW-1133">Transmembrane helix</keyword>
<reference key="1">
    <citation type="journal article" date="2005" name="Nature">
        <title>Initial sequence of the chimpanzee genome and comparison with the human genome.</title>
        <authorList>
            <consortium name="Chimpanzee sequencing and analysis consortium"/>
        </authorList>
    </citation>
    <scope>NUCLEOTIDE SEQUENCE [LARGE SCALE GENOMIC DNA]</scope>
</reference>
<reference key="2">
    <citation type="journal article" date="2005" name="Genetics">
        <title>Comparative genomics and diversifying selection of the clustered vertebrate protocadherin genes.</title>
        <authorList>
            <person name="Wu Q."/>
        </authorList>
    </citation>
    <scope>IDENTIFICATION</scope>
</reference>
<protein>
    <recommendedName>
        <fullName>Protocadherin gamma-C5</fullName>
        <shortName>PCDH-gamma-C5</shortName>
    </recommendedName>
</protein>